<name>HEMH_SHIB3</name>
<keyword id="KW-0963">Cytoplasm</keyword>
<keyword id="KW-0350">Heme biosynthesis</keyword>
<keyword id="KW-0408">Iron</keyword>
<keyword id="KW-0456">Lyase</keyword>
<keyword id="KW-0479">Metal-binding</keyword>
<keyword id="KW-0627">Porphyrin biosynthesis</keyword>
<keyword id="KW-1185">Reference proteome</keyword>
<dbReference type="EC" id="4.98.1.1" evidence="1"/>
<dbReference type="EMBL" id="CP001063">
    <property type="protein sequence ID" value="ACD08962.1"/>
    <property type="molecule type" value="Genomic_DNA"/>
</dbReference>
<dbReference type="RefSeq" id="WP_001250110.1">
    <property type="nucleotide sequence ID" value="NC_010658.1"/>
</dbReference>
<dbReference type="SMR" id="B2U4S8"/>
<dbReference type="STRING" id="344609.SbBS512_E0408"/>
<dbReference type="KEGG" id="sbc:SbBS512_E0408"/>
<dbReference type="HOGENOM" id="CLU_018884_0_0_6"/>
<dbReference type="UniPathway" id="UPA00252">
    <property type="reaction ID" value="UER00325"/>
</dbReference>
<dbReference type="Proteomes" id="UP000001030">
    <property type="component" value="Chromosome"/>
</dbReference>
<dbReference type="GO" id="GO:0005737">
    <property type="term" value="C:cytoplasm"/>
    <property type="evidence" value="ECO:0007669"/>
    <property type="project" value="UniProtKB-SubCell"/>
</dbReference>
<dbReference type="GO" id="GO:0004325">
    <property type="term" value="F:ferrochelatase activity"/>
    <property type="evidence" value="ECO:0007669"/>
    <property type="project" value="UniProtKB-UniRule"/>
</dbReference>
<dbReference type="GO" id="GO:0046872">
    <property type="term" value="F:metal ion binding"/>
    <property type="evidence" value="ECO:0007669"/>
    <property type="project" value="UniProtKB-KW"/>
</dbReference>
<dbReference type="GO" id="GO:0006783">
    <property type="term" value="P:heme biosynthetic process"/>
    <property type="evidence" value="ECO:0007669"/>
    <property type="project" value="UniProtKB-UniRule"/>
</dbReference>
<dbReference type="CDD" id="cd00419">
    <property type="entry name" value="Ferrochelatase_C"/>
    <property type="match status" value="1"/>
</dbReference>
<dbReference type="CDD" id="cd03411">
    <property type="entry name" value="Ferrochelatase_N"/>
    <property type="match status" value="1"/>
</dbReference>
<dbReference type="FunFam" id="3.40.50.1400:FF:000004">
    <property type="entry name" value="Ferrochelatase"/>
    <property type="match status" value="1"/>
</dbReference>
<dbReference type="Gene3D" id="3.40.50.1400">
    <property type="match status" value="2"/>
</dbReference>
<dbReference type="HAMAP" id="MF_00323">
    <property type="entry name" value="Ferrochelatase"/>
    <property type="match status" value="1"/>
</dbReference>
<dbReference type="InterPro" id="IPR001015">
    <property type="entry name" value="Ferrochelatase"/>
</dbReference>
<dbReference type="InterPro" id="IPR019772">
    <property type="entry name" value="Ferrochelatase_AS"/>
</dbReference>
<dbReference type="InterPro" id="IPR033644">
    <property type="entry name" value="Ferrochelatase_C"/>
</dbReference>
<dbReference type="InterPro" id="IPR033659">
    <property type="entry name" value="Ferrochelatase_N"/>
</dbReference>
<dbReference type="NCBIfam" id="TIGR00109">
    <property type="entry name" value="hemH"/>
    <property type="match status" value="1"/>
</dbReference>
<dbReference type="PANTHER" id="PTHR11108">
    <property type="entry name" value="FERROCHELATASE"/>
    <property type="match status" value="1"/>
</dbReference>
<dbReference type="PANTHER" id="PTHR11108:SF1">
    <property type="entry name" value="FERROCHELATASE, MITOCHONDRIAL"/>
    <property type="match status" value="1"/>
</dbReference>
<dbReference type="Pfam" id="PF00762">
    <property type="entry name" value="Ferrochelatase"/>
    <property type="match status" value="1"/>
</dbReference>
<dbReference type="SUPFAM" id="SSF53800">
    <property type="entry name" value="Chelatase"/>
    <property type="match status" value="1"/>
</dbReference>
<dbReference type="PROSITE" id="PS00534">
    <property type="entry name" value="FERROCHELATASE"/>
    <property type="match status" value="1"/>
</dbReference>
<proteinExistence type="inferred from homology"/>
<organism>
    <name type="scientific">Shigella boydii serotype 18 (strain CDC 3083-94 / BS512)</name>
    <dbReference type="NCBI Taxonomy" id="344609"/>
    <lineage>
        <taxon>Bacteria</taxon>
        <taxon>Pseudomonadati</taxon>
        <taxon>Pseudomonadota</taxon>
        <taxon>Gammaproteobacteria</taxon>
        <taxon>Enterobacterales</taxon>
        <taxon>Enterobacteriaceae</taxon>
        <taxon>Shigella</taxon>
    </lineage>
</organism>
<protein>
    <recommendedName>
        <fullName evidence="1">Ferrochelatase</fullName>
        <ecNumber evidence="1">4.98.1.1</ecNumber>
    </recommendedName>
    <alternativeName>
        <fullName evidence="1">Heme synthase</fullName>
    </alternativeName>
    <alternativeName>
        <fullName evidence="1">Protoheme ferro-lyase</fullName>
    </alternativeName>
</protein>
<comment type="function">
    <text evidence="1">Catalyzes the ferrous insertion into protoporphyrin IX.</text>
</comment>
<comment type="catalytic activity">
    <reaction evidence="1">
        <text>heme b + 2 H(+) = protoporphyrin IX + Fe(2+)</text>
        <dbReference type="Rhea" id="RHEA:22584"/>
        <dbReference type="ChEBI" id="CHEBI:15378"/>
        <dbReference type="ChEBI" id="CHEBI:29033"/>
        <dbReference type="ChEBI" id="CHEBI:57306"/>
        <dbReference type="ChEBI" id="CHEBI:60344"/>
        <dbReference type="EC" id="4.98.1.1"/>
    </reaction>
</comment>
<comment type="pathway">
    <text evidence="1">Porphyrin-containing compound metabolism; protoheme biosynthesis; protoheme from protoporphyrin-IX: step 1/1.</text>
</comment>
<comment type="subunit">
    <text evidence="1">Monomer.</text>
</comment>
<comment type="subcellular location">
    <subcellularLocation>
        <location evidence="1">Cytoplasm</location>
    </subcellularLocation>
</comment>
<comment type="similarity">
    <text evidence="1">Belongs to the ferrochelatase family.</text>
</comment>
<sequence>MRQTKTGILLANLGTPDAPTPEAVKRYLKQFLSDRRVVDTSRLLWWPLLRGVILPLRSPRVAKLYASVWMEGGSPLMVYSRQQQQALAQRLPETPVALGMSYGSPSLESAVDELLAEHVDHIVVLPLYPQFSCSTVGAVWDELARILARKRSIPGISFIRDYADNQDYINALANSVRASFAKHGEPDLLLLSYHGIPQRYADEGDDYPQRCRTTTRELASALGMAPEKVMMTFQSRFGREPWLMPYTDETLKMLGEKGVGYIQVMCPGFAADCLETLEEIAEQNREVFLGAGGKKYEYIPALNATPEHIEMMANLVAAYR</sequence>
<feature type="chain" id="PRO_1000116081" description="Ferrochelatase">
    <location>
        <begin position="1"/>
        <end position="320"/>
    </location>
</feature>
<feature type="binding site" evidence="1">
    <location>
        <position position="194"/>
    </location>
    <ligand>
        <name>Fe cation</name>
        <dbReference type="ChEBI" id="CHEBI:24875"/>
    </ligand>
</feature>
<feature type="binding site" evidence="1">
    <location>
        <position position="275"/>
    </location>
    <ligand>
        <name>Fe cation</name>
        <dbReference type="ChEBI" id="CHEBI:24875"/>
    </ligand>
</feature>
<gene>
    <name evidence="1" type="primary">hemH</name>
    <name type="ordered locus">SbBS512_E0408</name>
</gene>
<accession>B2U4S8</accession>
<evidence type="ECO:0000255" key="1">
    <source>
        <dbReference type="HAMAP-Rule" id="MF_00323"/>
    </source>
</evidence>
<reference key="1">
    <citation type="submission" date="2008-05" db="EMBL/GenBank/DDBJ databases">
        <title>Complete sequence of Shigella boydii serotype 18 strain BS512.</title>
        <authorList>
            <person name="Rasko D.A."/>
            <person name="Rosovitz M."/>
            <person name="Maurelli A.T."/>
            <person name="Myers G."/>
            <person name="Seshadri R."/>
            <person name="Cer R."/>
            <person name="Jiang L."/>
            <person name="Ravel J."/>
            <person name="Sebastian Y."/>
        </authorList>
    </citation>
    <scope>NUCLEOTIDE SEQUENCE [LARGE SCALE GENOMIC DNA]</scope>
    <source>
        <strain>CDC 3083-94 / BS512</strain>
    </source>
</reference>